<organism>
    <name type="scientific">Mycoplasma genitalium (strain ATCC 33530 / DSM 19775 / NCTC 10195 / G37)</name>
    <name type="common">Mycoplasmoides genitalium</name>
    <dbReference type="NCBI Taxonomy" id="243273"/>
    <lineage>
        <taxon>Bacteria</taxon>
        <taxon>Bacillati</taxon>
        <taxon>Mycoplasmatota</taxon>
        <taxon>Mycoplasmoidales</taxon>
        <taxon>Mycoplasmoidaceae</taxon>
        <taxon>Mycoplasmoides</taxon>
    </lineage>
</organism>
<reference key="1">
    <citation type="journal article" date="1995" name="Science">
        <title>The minimal gene complement of Mycoplasma genitalium.</title>
        <authorList>
            <person name="Fraser C.M."/>
            <person name="Gocayne J.D."/>
            <person name="White O."/>
            <person name="Adams M.D."/>
            <person name="Clayton R.A."/>
            <person name="Fleischmann R.D."/>
            <person name="Bult C.J."/>
            <person name="Kerlavage A.R."/>
            <person name="Sutton G.G."/>
            <person name="Kelley J.M."/>
            <person name="Fritchman J.L."/>
            <person name="Weidman J.F."/>
            <person name="Small K.V."/>
            <person name="Sandusky M."/>
            <person name="Fuhrmann J.L."/>
            <person name="Nguyen D.T."/>
            <person name="Utterback T.R."/>
            <person name="Saudek D.M."/>
            <person name="Phillips C.A."/>
            <person name="Merrick J.M."/>
            <person name="Tomb J.-F."/>
            <person name="Dougherty B.A."/>
            <person name="Bott K.F."/>
            <person name="Hu P.-C."/>
            <person name="Lucier T.S."/>
            <person name="Peterson S.N."/>
            <person name="Smith H.O."/>
            <person name="Hutchison C.A. III"/>
            <person name="Venter J.C."/>
        </authorList>
    </citation>
    <scope>NUCLEOTIDE SEQUENCE [LARGE SCALE GENOMIC DNA]</scope>
    <source>
        <strain>ATCC 33530 / DSM 19775 / NCTC 10195 / G37</strain>
    </source>
</reference>
<reference key="2">
    <citation type="journal article" date="1993" name="J. Bacteriol.">
        <title>A survey of the Mycoplasma genitalium genome by using random sequencing.</title>
        <authorList>
            <person name="Peterson S.N."/>
            <person name="Hu P.-C."/>
            <person name="Bott K.F."/>
            <person name="Hutchison C.A. III"/>
        </authorList>
    </citation>
    <scope>NUCLEOTIDE SEQUENCE [GENOMIC DNA] OF 78-216 AND 511-607</scope>
    <source>
        <strain>ATCC 33530 / DSM 19775 / NCTC 10195 / G37</strain>
    </source>
</reference>
<feature type="chain" id="PRO_0000180501" description="DNA primase">
    <location>
        <begin position="1"/>
        <end position="607"/>
    </location>
</feature>
<feature type="domain" description="Toprim" evidence="1">
    <location>
        <begin position="267"/>
        <end position="350"/>
    </location>
</feature>
<feature type="zinc finger region" description="CHC2-type" evidence="1">
    <location>
        <begin position="39"/>
        <end position="63"/>
    </location>
</feature>
<feature type="binding site" evidence="1">
    <location>
        <position position="273"/>
    </location>
    <ligand>
        <name>Mg(2+)</name>
        <dbReference type="ChEBI" id="CHEBI:18420"/>
        <label>1</label>
        <note>catalytic</note>
    </ligand>
</feature>
<feature type="binding site" evidence="1">
    <location>
        <position position="319"/>
    </location>
    <ligand>
        <name>Mg(2+)</name>
        <dbReference type="ChEBI" id="CHEBI:18420"/>
        <label>1</label>
        <note>catalytic</note>
    </ligand>
</feature>
<feature type="binding site" evidence="1">
    <location>
        <position position="319"/>
    </location>
    <ligand>
        <name>Mg(2+)</name>
        <dbReference type="ChEBI" id="CHEBI:18420"/>
        <label>2</label>
    </ligand>
</feature>
<feature type="binding site" evidence="1">
    <location>
        <position position="321"/>
    </location>
    <ligand>
        <name>Mg(2+)</name>
        <dbReference type="ChEBI" id="CHEBI:18420"/>
        <label>2</label>
    </ligand>
</feature>
<name>DNAG_MYCGE</name>
<sequence length="607" mass="71062">MVNKSNSLDELLKQIKITEIIQHYGVKIQTKGNSLLALCPFHDDKNPSMSISSSKNIFKCWACNAAGNGIAFIQKHDQLDWKTALKKAIEICGIKLENWNSNLLTKVDPKQKRYWEINNALITYYQTRLKRETNPNGMNYLVEKRKLNKTLIEQFQLGLAFHNEDKYLCESMERYPFINPKIKPSELYLFSKTNQQGLGFFDFNTKKATFQNQIMIPIHDFNGNPVGFSARSVDNINKLKYKNSADHEFFKKGELLFNFHRLNKNLNQLFIVEGYFDVFTLTNSKFEAVALMGLALNDVQIKAIKAHFKELQTLVLALDNDASGQNAVFSLIEKLNNNNFIVEIVQWEHNYKDWDELYLNKGSEQVILQANKRQNLIEYLVSFFKKQQLDQRVITNKIIAFLTKNQTILNDHSFLIFLIKNLVKLLEYSDEKTLYETVLKHKEKLVSKFDNNRFYINTSGHAQPPQELQKTTAALVQTAFEEAVNELWKPEIFAFALIDKRFLVELKQSHLDEVFKECNFNLFDVELFIEKARIYWSENQTANWVGFESVLDQNYLLNNKARLLEIKDIFLDELTCYQANDFQNYLKTFQTLLKQQKQRLKNLKLTL</sequence>
<dbReference type="EC" id="2.7.7.101" evidence="1"/>
<dbReference type="EMBL" id="L43967">
    <property type="protein sequence ID" value="AAC71470.1"/>
    <property type="molecule type" value="Genomic_DNA"/>
</dbReference>
<dbReference type="EMBL" id="U02146">
    <property type="protein sequence ID" value="AAD12426.1"/>
    <property type="molecule type" value="Genomic_DNA"/>
</dbReference>
<dbReference type="EMBL" id="U01771">
    <property type="protein sequence ID" value="AAD10589.1"/>
    <property type="molecule type" value="Genomic_DNA"/>
</dbReference>
<dbReference type="PIR" id="F64227">
    <property type="entry name" value="F64227"/>
</dbReference>
<dbReference type="RefSeq" id="WP_009885788.1">
    <property type="nucleotide sequence ID" value="NC_000908.2"/>
</dbReference>
<dbReference type="SMR" id="P47492"/>
<dbReference type="FunCoup" id="P47492">
    <property type="interactions" value="113"/>
</dbReference>
<dbReference type="STRING" id="243273.MG_250"/>
<dbReference type="GeneID" id="88282396"/>
<dbReference type="KEGG" id="mge:MG_250"/>
<dbReference type="eggNOG" id="COG0358">
    <property type="taxonomic scope" value="Bacteria"/>
</dbReference>
<dbReference type="HOGENOM" id="CLU_414370_0_0_14"/>
<dbReference type="InParanoid" id="P47492"/>
<dbReference type="OrthoDB" id="9803773at2"/>
<dbReference type="BioCyc" id="MGEN243273:G1GJ2-297-MONOMER"/>
<dbReference type="Proteomes" id="UP000000807">
    <property type="component" value="Chromosome"/>
</dbReference>
<dbReference type="GO" id="GO:0005737">
    <property type="term" value="C:cytoplasm"/>
    <property type="evidence" value="ECO:0000318"/>
    <property type="project" value="GO_Central"/>
</dbReference>
<dbReference type="GO" id="GO:0000428">
    <property type="term" value="C:DNA-directed RNA polymerase complex"/>
    <property type="evidence" value="ECO:0007669"/>
    <property type="project" value="UniProtKB-KW"/>
</dbReference>
<dbReference type="GO" id="GO:1990077">
    <property type="term" value="C:primosome complex"/>
    <property type="evidence" value="ECO:0007669"/>
    <property type="project" value="UniProtKB-KW"/>
</dbReference>
<dbReference type="GO" id="GO:0003677">
    <property type="term" value="F:DNA binding"/>
    <property type="evidence" value="ECO:0007669"/>
    <property type="project" value="UniProtKB-KW"/>
</dbReference>
<dbReference type="GO" id="GO:0003899">
    <property type="term" value="F:DNA-directed RNA polymerase activity"/>
    <property type="evidence" value="ECO:0007669"/>
    <property type="project" value="InterPro"/>
</dbReference>
<dbReference type="GO" id="GO:0008270">
    <property type="term" value="F:zinc ion binding"/>
    <property type="evidence" value="ECO:0007669"/>
    <property type="project" value="UniProtKB-UniRule"/>
</dbReference>
<dbReference type="GO" id="GO:0006269">
    <property type="term" value="P:DNA replication, synthesis of primer"/>
    <property type="evidence" value="ECO:0000318"/>
    <property type="project" value="GO_Central"/>
</dbReference>
<dbReference type="CDD" id="cd03364">
    <property type="entry name" value="TOPRIM_DnaG_primases"/>
    <property type="match status" value="1"/>
</dbReference>
<dbReference type="Gene3D" id="3.40.1360.10">
    <property type="match status" value="1"/>
</dbReference>
<dbReference type="Gene3D" id="3.90.980.10">
    <property type="entry name" value="DNA primase, catalytic core, N-terminal domain"/>
    <property type="match status" value="1"/>
</dbReference>
<dbReference type="Gene3D" id="3.90.580.10">
    <property type="entry name" value="Zinc finger, CHC2-type domain"/>
    <property type="match status" value="1"/>
</dbReference>
<dbReference type="HAMAP" id="MF_00974">
    <property type="entry name" value="DNA_primase_DnaG"/>
    <property type="match status" value="1"/>
</dbReference>
<dbReference type="InterPro" id="IPR037068">
    <property type="entry name" value="DNA_primase_core_N_sf"/>
</dbReference>
<dbReference type="InterPro" id="IPR006295">
    <property type="entry name" value="DNA_primase_DnaG"/>
</dbReference>
<dbReference type="InterPro" id="IPR036977">
    <property type="entry name" value="DNA_primase_Znf_CHC2"/>
</dbReference>
<dbReference type="InterPro" id="IPR030846">
    <property type="entry name" value="DnaG_bac"/>
</dbReference>
<dbReference type="InterPro" id="IPR013264">
    <property type="entry name" value="DNAG_N"/>
</dbReference>
<dbReference type="InterPro" id="IPR050219">
    <property type="entry name" value="DnaG_primase"/>
</dbReference>
<dbReference type="InterPro" id="IPR034151">
    <property type="entry name" value="TOPRIM_DnaG_bac"/>
</dbReference>
<dbReference type="InterPro" id="IPR006171">
    <property type="entry name" value="TOPRIM_dom"/>
</dbReference>
<dbReference type="InterPro" id="IPR002694">
    <property type="entry name" value="Znf_CHC2"/>
</dbReference>
<dbReference type="NCBIfam" id="TIGR01391">
    <property type="entry name" value="dnaG"/>
    <property type="match status" value="1"/>
</dbReference>
<dbReference type="PANTHER" id="PTHR30313">
    <property type="entry name" value="DNA PRIMASE"/>
    <property type="match status" value="1"/>
</dbReference>
<dbReference type="PANTHER" id="PTHR30313:SF2">
    <property type="entry name" value="DNA PRIMASE"/>
    <property type="match status" value="1"/>
</dbReference>
<dbReference type="Pfam" id="PF08275">
    <property type="entry name" value="DNAG_N"/>
    <property type="match status" value="1"/>
</dbReference>
<dbReference type="Pfam" id="PF13155">
    <property type="entry name" value="Toprim_2"/>
    <property type="match status" value="1"/>
</dbReference>
<dbReference type="Pfam" id="PF01807">
    <property type="entry name" value="Zn_ribbon_DnaG"/>
    <property type="match status" value="1"/>
</dbReference>
<dbReference type="SMART" id="SM00493">
    <property type="entry name" value="TOPRIM"/>
    <property type="match status" value="1"/>
</dbReference>
<dbReference type="SMART" id="SM00400">
    <property type="entry name" value="ZnF_CHCC"/>
    <property type="match status" value="1"/>
</dbReference>
<dbReference type="SUPFAM" id="SSF56731">
    <property type="entry name" value="DNA primase core"/>
    <property type="match status" value="1"/>
</dbReference>
<dbReference type="SUPFAM" id="SSF57783">
    <property type="entry name" value="Zinc beta-ribbon"/>
    <property type="match status" value="1"/>
</dbReference>
<dbReference type="PROSITE" id="PS50880">
    <property type="entry name" value="TOPRIM"/>
    <property type="match status" value="1"/>
</dbReference>
<gene>
    <name evidence="1" type="primary">dnaG</name>
    <name type="synonym">dnaE</name>
    <name type="ordered locus">MG250</name>
</gene>
<comment type="function">
    <text evidence="1">RNA polymerase that catalyzes the synthesis of short RNA molecules used as primers for DNA polymerase during DNA replication.</text>
</comment>
<comment type="catalytic activity">
    <reaction evidence="1">
        <text>ssDNA + n NTP = ssDNA/pppN(pN)n-1 hybrid + (n-1) diphosphate.</text>
        <dbReference type="EC" id="2.7.7.101"/>
    </reaction>
</comment>
<comment type="cofactor">
    <cofactor evidence="1">
        <name>Zn(2+)</name>
        <dbReference type="ChEBI" id="CHEBI:29105"/>
    </cofactor>
    <text evidence="1">Binds 1 zinc ion per monomer.</text>
</comment>
<comment type="cofactor">
    <cofactor evidence="1">
        <name>Mg(2+)</name>
        <dbReference type="ChEBI" id="CHEBI:18420"/>
    </cofactor>
    <text evidence="1">Binds two Mg(2+) per subunit.</text>
</comment>
<comment type="subunit">
    <text evidence="1">Monomer. Interacts with DnaB.</text>
</comment>
<comment type="domain">
    <text evidence="1">Contains an N-terminal zinc-binding domain, a central core domain that contains the primase activity, and a C-terminal DnaB-binding domain.</text>
</comment>
<comment type="similarity">
    <text evidence="1">Belongs to the DnaG primase family.</text>
</comment>
<keyword id="KW-0235">DNA replication</keyword>
<keyword id="KW-0238">DNA-binding</keyword>
<keyword id="KW-0240">DNA-directed RNA polymerase</keyword>
<keyword id="KW-0460">Magnesium</keyword>
<keyword id="KW-0479">Metal-binding</keyword>
<keyword id="KW-0548">Nucleotidyltransferase</keyword>
<keyword id="KW-0639">Primosome</keyword>
<keyword id="KW-1185">Reference proteome</keyword>
<keyword id="KW-0804">Transcription</keyword>
<keyword id="KW-0808">Transferase</keyword>
<keyword id="KW-0862">Zinc</keyword>
<keyword id="KW-0863">Zinc-finger</keyword>
<accession>P47492</accession>
<protein>
    <recommendedName>
        <fullName evidence="1">DNA primase</fullName>
        <ecNumber evidence="1">2.7.7.101</ecNumber>
    </recommendedName>
</protein>
<proteinExistence type="inferred from homology"/>
<evidence type="ECO:0000255" key="1">
    <source>
        <dbReference type="HAMAP-Rule" id="MF_00974"/>
    </source>
</evidence>